<comment type="function">
    <text evidence="1">Digests double-stranded RNA. Involved in the processing of primary rRNA transcript to yield the immediate precursors to the large and small rRNAs (23S and 16S). Processes some mRNAs, and tRNAs when they are encoded in the rRNA operon. Processes pre-crRNA and tracrRNA of type II CRISPR loci if present in the organism.</text>
</comment>
<comment type="catalytic activity">
    <reaction evidence="1">
        <text>Endonucleolytic cleavage to 5'-phosphomonoester.</text>
        <dbReference type="EC" id="3.1.26.3"/>
    </reaction>
</comment>
<comment type="cofactor">
    <cofactor evidence="1">
        <name>Mg(2+)</name>
        <dbReference type="ChEBI" id="CHEBI:18420"/>
    </cofactor>
</comment>
<comment type="subunit">
    <text evidence="1">Homodimer.</text>
</comment>
<comment type="subcellular location">
    <subcellularLocation>
        <location evidence="1">Cytoplasm</location>
    </subcellularLocation>
</comment>
<comment type="similarity">
    <text evidence="1">Belongs to the ribonuclease III family.</text>
</comment>
<name>RNC_VIBPA</name>
<reference key="1">
    <citation type="journal article" date="2003" name="Lancet">
        <title>Genome sequence of Vibrio parahaemolyticus: a pathogenic mechanism distinct from that of V. cholerae.</title>
        <authorList>
            <person name="Makino K."/>
            <person name="Oshima K."/>
            <person name="Kurokawa K."/>
            <person name="Yokoyama K."/>
            <person name="Uda T."/>
            <person name="Tagomori K."/>
            <person name="Iijima Y."/>
            <person name="Najima M."/>
            <person name="Nakano M."/>
            <person name="Yamashita A."/>
            <person name="Kubota Y."/>
            <person name="Kimura S."/>
            <person name="Yasunaga T."/>
            <person name="Honda T."/>
            <person name="Shinagawa H."/>
            <person name="Hattori M."/>
            <person name="Iida T."/>
        </authorList>
    </citation>
    <scope>NUCLEOTIDE SEQUENCE [LARGE SCALE GENOMIC DNA]</scope>
    <source>
        <strain>RIMD 2210633</strain>
    </source>
</reference>
<dbReference type="EC" id="3.1.26.3" evidence="1"/>
<dbReference type="EMBL" id="BA000031">
    <property type="protein sequence ID" value="BAC60835.1"/>
    <property type="molecule type" value="Genomic_DNA"/>
</dbReference>
<dbReference type="RefSeq" id="NP_798951.1">
    <property type="nucleotide sequence ID" value="NC_004603.1"/>
</dbReference>
<dbReference type="RefSeq" id="WP_005460683.1">
    <property type="nucleotide sequence ID" value="NC_004603.1"/>
</dbReference>
<dbReference type="SMR" id="Q87LN9"/>
<dbReference type="GeneID" id="1190096"/>
<dbReference type="KEGG" id="vpa:VP2572"/>
<dbReference type="PATRIC" id="fig|223926.6.peg.2470"/>
<dbReference type="eggNOG" id="COG0571">
    <property type="taxonomic scope" value="Bacteria"/>
</dbReference>
<dbReference type="HOGENOM" id="CLU_000907_1_1_6"/>
<dbReference type="Proteomes" id="UP000002493">
    <property type="component" value="Chromosome 1"/>
</dbReference>
<dbReference type="GO" id="GO:0005737">
    <property type="term" value="C:cytoplasm"/>
    <property type="evidence" value="ECO:0007669"/>
    <property type="project" value="UniProtKB-SubCell"/>
</dbReference>
<dbReference type="GO" id="GO:0003725">
    <property type="term" value="F:double-stranded RNA binding"/>
    <property type="evidence" value="ECO:0007669"/>
    <property type="project" value="TreeGrafter"/>
</dbReference>
<dbReference type="GO" id="GO:0046872">
    <property type="term" value="F:metal ion binding"/>
    <property type="evidence" value="ECO:0007669"/>
    <property type="project" value="UniProtKB-KW"/>
</dbReference>
<dbReference type="GO" id="GO:0004525">
    <property type="term" value="F:ribonuclease III activity"/>
    <property type="evidence" value="ECO:0007669"/>
    <property type="project" value="UniProtKB-UniRule"/>
</dbReference>
<dbReference type="GO" id="GO:0019843">
    <property type="term" value="F:rRNA binding"/>
    <property type="evidence" value="ECO:0007669"/>
    <property type="project" value="UniProtKB-KW"/>
</dbReference>
<dbReference type="GO" id="GO:0006397">
    <property type="term" value="P:mRNA processing"/>
    <property type="evidence" value="ECO:0007669"/>
    <property type="project" value="UniProtKB-UniRule"/>
</dbReference>
<dbReference type="GO" id="GO:0010468">
    <property type="term" value="P:regulation of gene expression"/>
    <property type="evidence" value="ECO:0007669"/>
    <property type="project" value="TreeGrafter"/>
</dbReference>
<dbReference type="GO" id="GO:0006364">
    <property type="term" value="P:rRNA processing"/>
    <property type="evidence" value="ECO:0007669"/>
    <property type="project" value="UniProtKB-UniRule"/>
</dbReference>
<dbReference type="GO" id="GO:0008033">
    <property type="term" value="P:tRNA processing"/>
    <property type="evidence" value="ECO:0007669"/>
    <property type="project" value="UniProtKB-KW"/>
</dbReference>
<dbReference type="CDD" id="cd10845">
    <property type="entry name" value="DSRM_RNAse_III_family"/>
    <property type="match status" value="1"/>
</dbReference>
<dbReference type="CDD" id="cd00593">
    <property type="entry name" value="RIBOc"/>
    <property type="match status" value="1"/>
</dbReference>
<dbReference type="FunFam" id="1.10.1520.10:FF:000001">
    <property type="entry name" value="Ribonuclease 3"/>
    <property type="match status" value="1"/>
</dbReference>
<dbReference type="FunFam" id="3.30.160.20:FF:000003">
    <property type="entry name" value="Ribonuclease 3"/>
    <property type="match status" value="1"/>
</dbReference>
<dbReference type="Gene3D" id="3.30.160.20">
    <property type="match status" value="1"/>
</dbReference>
<dbReference type="Gene3D" id="1.10.1520.10">
    <property type="entry name" value="Ribonuclease III domain"/>
    <property type="match status" value="1"/>
</dbReference>
<dbReference type="HAMAP" id="MF_00104">
    <property type="entry name" value="RNase_III"/>
    <property type="match status" value="1"/>
</dbReference>
<dbReference type="InterPro" id="IPR014720">
    <property type="entry name" value="dsRBD_dom"/>
</dbReference>
<dbReference type="InterPro" id="IPR011907">
    <property type="entry name" value="RNase_III"/>
</dbReference>
<dbReference type="InterPro" id="IPR000999">
    <property type="entry name" value="RNase_III_dom"/>
</dbReference>
<dbReference type="InterPro" id="IPR036389">
    <property type="entry name" value="RNase_III_sf"/>
</dbReference>
<dbReference type="NCBIfam" id="TIGR02191">
    <property type="entry name" value="RNaseIII"/>
    <property type="match status" value="1"/>
</dbReference>
<dbReference type="PANTHER" id="PTHR11207:SF0">
    <property type="entry name" value="RIBONUCLEASE 3"/>
    <property type="match status" value="1"/>
</dbReference>
<dbReference type="PANTHER" id="PTHR11207">
    <property type="entry name" value="RIBONUCLEASE III"/>
    <property type="match status" value="1"/>
</dbReference>
<dbReference type="Pfam" id="PF00035">
    <property type="entry name" value="dsrm"/>
    <property type="match status" value="1"/>
</dbReference>
<dbReference type="Pfam" id="PF14622">
    <property type="entry name" value="Ribonucleas_3_3"/>
    <property type="match status" value="1"/>
</dbReference>
<dbReference type="SMART" id="SM00358">
    <property type="entry name" value="DSRM"/>
    <property type="match status" value="1"/>
</dbReference>
<dbReference type="SMART" id="SM00535">
    <property type="entry name" value="RIBOc"/>
    <property type="match status" value="1"/>
</dbReference>
<dbReference type="SUPFAM" id="SSF54768">
    <property type="entry name" value="dsRNA-binding domain-like"/>
    <property type="match status" value="1"/>
</dbReference>
<dbReference type="SUPFAM" id="SSF69065">
    <property type="entry name" value="RNase III domain-like"/>
    <property type="match status" value="1"/>
</dbReference>
<dbReference type="PROSITE" id="PS50137">
    <property type="entry name" value="DS_RBD"/>
    <property type="match status" value="1"/>
</dbReference>
<dbReference type="PROSITE" id="PS00517">
    <property type="entry name" value="RNASE_3_1"/>
    <property type="match status" value="1"/>
</dbReference>
<dbReference type="PROSITE" id="PS50142">
    <property type="entry name" value="RNASE_3_2"/>
    <property type="match status" value="1"/>
</dbReference>
<evidence type="ECO:0000255" key="1">
    <source>
        <dbReference type="HAMAP-Rule" id="MF_00104"/>
    </source>
</evidence>
<evidence type="ECO:0000256" key="2">
    <source>
        <dbReference type="SAM" id="MobiDB-lite"/>
    </source>
</evidence>
<protein>
    <recommendedName>
        <fullName evidence="1">Ribonuclease 3</fullName>
        <ecNumber evidence="1">3.1.26.3</ecNumber>
    </recommendedName>
    <alternativeName>
        <fullName evidence="1">Ribonuclease III</fullName>
        <shortName evidence="1">RNase III</shortName>
    </alternativeName>
</protein>
<keyword id="KW-0963">Cytoplasm</keyword>
<keyword id="KW-0255">Endonuclease</keyword>
<keyword id="KW-0378">Hydrolase</keyword>
<keyword id="KW-0460">Magnesium</keyword>
<keyword id="KW-0479">Metal-binding</keyword>
<keyword id="KW-0507">mRNA processing</keyword>
<keyword id="KW-0540">Nuclease</keyword>
<keyword id="KW-0694">RNA-binding</keyword>
<keyword id="KW-0698">rRNA processing</keyword>
<keyword id="KW-0699">rRNA-binding</keyword>
<keyword id="KW-0819">tRNA processing</keyword>
<gene>
    <name evidence="1" type="primary">rnc</name>
    <name type="ordered locus">VP2572</name>
</gene>
<organism>
    <name type="scientific">Vibrio parahaemolyticus serotype O3:K6 (strain RIMD 2210633)</name>
    <dbReference type="NCBI Taxonomy" id="223926"/>
    <lineage>
        <taxon>Bacteria</taxon>
        <taxon>Pseudomonadati</taxon>
        <taxon>Pseudomonadota</taxon>
        <taxon>Gammaproteobacteria</taxon>
        <taxon>Vibrionales</taxon>
        <taxon>Vibrionaceae</taxon>
        <taxon>Vibrio</taxon>
    </lineage>
</organism>
<feature type="chain" id="PRO_0000180453" description="Ribonuclease 3">
    <location>
        <begin position="1"/>
        <end position="225"/>
    </location>
</feature>
<feature type="domain" description="RNase III" evidence="1">
    <location>
        <begin position="5"/>
        <end position="127"/>
    </location>
</feature>
<feature type="domain" description="DRBM" evidence="1">
    <location>
        <begin position="154"/>
        <end position="224"/>
    </location>
</feature>
<feature type="region of interest" description="Disordered" evidence="2">
    <location>
        <begin position="204"/>
        <end position="225"/>
    </location>
</feature>
<feature type="compositionally biased region" description="Low complexity" evidence="2">
    <location>
        <begin position="212"/>
        <end position="225"/>
    </location>
</feature>
<feature type="active site" evidence="1">
    <location>
        <position position="44"/>
    </location>
</feature>
<feature type="active site" evidence="1">
    <location>
        <position position="116"/>
    </location>
</feature>
<feature type="binding site" evidence="1">
    <location>
        <position position="40"/>
    </location>
    <ligand>
        <name>Mg(2+)</name>
        <dbReference type="ChEBI" id="CHEBI:18420"/>
    </ligand>
</feature>
<feature type="binding site" evidence="1">
    <location>
        <position position="113"/>
    </location>
    <ligand>
        <name>Mg(2+)</name>
        <dbReference type="ChEBI" id="CHEBI:18420"/>
    </ligand>
</feature>
<feature type="binding site" evidence="1">
    <location>
        <position position="116"/>
    </location>
    <ligand>
        <name>Mg(2+)</name>
        <dbReference type="ChEBI" id="CHEBI:18420"/>
    </ligand>
</feature>
<sequence length="225" mass="25068">MNSPIDKLERKLGYQFKDAGLINLALTHRSANSKHNERLEFLGDSILSFVIADDLYHRFPKVNEGDMSRMRATLVRGHTLAELGREFDLGDYLKLGPGELKSGGFRRDSILADAVEAIIGAIYLDSDIEKVRSIVLSWYNSRLEAIKPGVSQKDPKTRLQEFLQGRRKPLPVYTVTNIKGEAHNQEFTVECEVAGVDKPVIGKGTSRRKAEQAAAETALEQLTNG</sequence>
<accession>Q87LN9</accession>
<proteinExistence type="inferred from homology"/>